<comment type="function">
    <text evidence="1 5 6 7 8">Activates phosphatidylinositol 3-kinase when bound to the regulatory p85 subunit (By similarity). May mediate the control of various cellular processes by insulin-like peptides. When phosphorylated by the insulin receptor binds specifically to various cellular proteins containing SH2 domains. Involved in control of cell proliferation, cell size, and body and organ growth throughout development. Also has a role in a signaling pathway controlling the physiological response required to endure periods of low nutrient conditions. Insulin/insulin-like growth factor (IGF) signaling pathway has a role in regulating aging and is necessary in the ovary for vitellogenic maturation.</text>
</comment>
<comment type="subunit">
    <text>Bindings to phosphatidylinositol 3-kinase and SHP2.</text>
</comment>
<comment type="interaction">
    <interactant intactId="EBI-176370">
        <id>Q9XTN2</id>
    </interactant>
    <interactant intactId="EBI-92063">
        <id>P09208</id>
        <label>InR</label>
    </interactant>
    <organismsDiffer>false</organismsDiffer>
    <experiments>3</experiments>
</comment>
<comment type="developmental stage">
    <text evidence="5">Expressed during G1, S and G2 phase of the cell cycle.</text>
</comment>
<comment type="disruption phenotype">
    <text evidence="7 8">Female sterile. Extends fruit fly median life-span by up to 48% in homozygotes and 36% in heterozygotes.</text>
</comment>
<comment type="miscellaneous">
    <text evidence="11">'Chico' means 'small boy' in Spanish.</text>
</comment>
<comment type="sequence caution" evidence="11">
    <conflict type="erroneous initiation">
        <sequence resource="EMBL-CDS" id="AAD55429"/>
    </conflict>
    <text>Truncated N-terminus.</text>
</comment>
<name>IRS1_DROME</name>
<reference evidence="11" key="1">
    <citation type="journal article" date="1999" name="Cell">
        <title>Autonomous control of cell and organ size by CHICO, a Drosophila homolog of vertebrate IRS1-4.</title>
        <authorList>
            <person name="Boehni R."/>
            <person name="Riesgo-Escovar J."/>
            <person name="Oldham S.M."/>
            <person name="Brogiolo W."/>
            <person name="Stocker H."/>
            <person name="Andruss B.F."/>
            <person name="Beckingham K."/>
            <person name="Hafen E."/>
        </authorList>
    </citation>
    <scope>NUCLEOTIDE SEQUENCE [MRNA]</scope>
    <scope>FUNCTION</scope>
    <scope>DEVELOPMENTAL STAGE</scope>
    <source>
        <tissue>Embryo</tissue>
    </source>
</reference>
<reference evidence="11" key="2">
    <citation type="journal article" date="2000" name="J. Biol. Chem.">
        <title>Characterization of Drosophila insulin receptor substrate.</title>
        <authorList>
            <person name="Poltilove R.M.K."/>
            <person name="Jacobs A.R."/>
            <person name="Haft C.R."/>
            <person name="Xu P."/>
            <person name="Taylor S.I."/>
        </authorList>
    </citation>
    <scope>NUCLEOTIDE SEQUENCE [MRNA]</scope>
    <scope>FUNCTION</scope>
    <source>
        <tissue>Embryo</tissue>
    </source>
</reference>
<reference key="3">
    <citation type="journal article" date="2010" name="Mol. Ecol.">
        <title>Identification of a candidate adaptive polymorphism for Drosophila life history by parallel independent clines on two continents.</title>
        <authorList>
            <person name="Paaby A.B."/>
            <person name="Blacket M.J."/>
            <person name="Hoffmann A.A."/>
            <person name="Schmidt P.S."/>
        </authorList>
    </citation>
    <scope>NUCLEOTIDE SEQUENCE [GENOMIC DNA]</scope>
    <scope>VARIANTS CYS-29; THR-165; HIS-334 DEL; VAL-429; THR-452; ARG-664; SER-675; ILE-676; GLY-721; LEU-722; SER-744; HIS-758 DEL; MET-808; VAL-851 AND THR-873</scope>
    <source>
        <strain>FSP15</strain>
        <strain>FSP16</strain>
        <strain>FSP19</strain>
        <strain>FSP2</strain>
        <strain>FSP23</strain>
        <strain>FSP25</strain>
        <strain>FSP29</strain>
        <strain>FSP3</strain>
        <strain>RR11</strain>
        <strain>RR17</strain>
        <strain>RR18</strain>
        <strain>RR33</strain>
        <strain>RR35</strain>
        <strain>RR52</strain>
        <strain>RR8</strain>
        <strain>S103</strain>
        <strain>S107</strain>
        <strain>S108</strain>
        <strain>S76</strain>
        <strain>S97</strain>
        <strain>SL5_131</strain>
        <strain>SL5_29</strain>
        <strain>T15</strain>
        <strain>T28</strain>
        <strain>T39</strain>
        <strain>T41</strain>
        <strain>T9</strain>
    </source>
</reference>
<reference evidence="11" key="4">
    <citation type="journal article" date="2000" name="Science">
        <title>The genome sequence of Drosophila melanogaster.</title>
        <authorList>
            <person name="Adams M.D."/>
            <person name="Celniker S.E."/>
            <person name="Holt R.A."/>
            <person name="Evans C.A."/>
            <person name="Gocayne J.D."/>
            <person name="Amanatides P.G."/>
            <person name="Scherer S.E."/>
            <person name="Li P.W."/>
            <person name="Hoskins R.A."/>
            <person name="Galle R.F."/>
            <person name="George R.A."/>
            <person name="Lewis S.E."/>
            <person name="Richards S."/>
            <person name="Ashburner M."/>
            <person name="Henderson S.N."/>
            <person name="Sutton G.G."/>
            <person name="Wortman J.R."/>
            <person name="Yandell M.D."/>
            <person name="Zhang Q."/>
            <person name="Chen L.X."/>
            <person name="Brandon R.C."/>
            <person name="Rogers Y.-H.C."/>
            <person name="Blazej R.G."/>
            <person name="Champe M."/>
            <person name="Pfeiffer B.D."/>
            <person name="Wan K.H."/>
            <person name="Doyle C."/>
            <person name="Baxter E.G."/>
            <person name="Helt G."/>
            <person name="Nelson C.R."/>
            <person name="Miklos G.L.G."/>
            <person name="Abril J.F."/>
            <person name="Agbayani A."/>
            <person name="An H.-J."/>
            <person name="Andrews-Pfannkoch C."/>
            <person name="Baldwin D."/>
            <person name="Ballew R.M."/>
            <person name="Basu A."/>
            <person name="Baxendale J."/>
            <person name="Bayraktaroglu L."/>
            <person name="Beasley E.M."/>
            <person name="Beeson K.Y."/>
            <person name="Benos P.V."/>
            <person name="Berman B.P."/>
            <person name="Bhandari D."/>
            <person name="Bolshakov S."/>
            <person name="Borkova D."/>
            <person name="Botchan M.R."/>
            <person name="Bouck J."/>
            <person name="Brokstein P."/>
            <person name="Brottier P."/>
            <person name="Burtis K.C."/>
            <person name="Busam D.A."/>
            <person name="Butler H."/>
            <person name="Cadieu E."/>
            <person name="Center A."/>
            <person name="Chandra I."/>
            <person name="Cherry J.M."/>
            <person name="Cawley S."/>
            <person name="Dahlke C."/>
            <person name="Davenport L.B."/>
            <person name="Davies P."/>
            <person name="de Pablos B."/>
            <person name="Delcher A."/>
            <person name="Deng Z."/>
            <person name="Mays A.D."/>
            <person name="Dew I."/>
            <person name="Dietz S.M."/>
            <person name="Dodson K."/>
            <person name="Doup L.E."/>
            <person name="Downes M."/>
            <person name="Dugan-Rocha S."/>
            <person name="Dunkov B.C."/>
            <person name="Dunn P."/>
            <person name="Durbin K.J."/>
            <person name="Evangelista C.C."/>
            <person name="Ferraz C."/>
            <person name="Ferriera S."/>
            <person name="Fleischmann W."/>
            <person name="Fosler C."/>
            <person name="Gabrielian A.E."/>
            <person name="Garg N.S."/>
            <person name="Gelbart W.M."/>
            <person name="Glasser K."/>
            <person name="Glodek A."/>
            <person name="Gong F."/>
            <person name="Gorrell J.H."/>
            <person name="Gu Z."/>
            <person name="Guan P."/>
            <person name="Harris M."/>
            <person name="Harris N.L."/>
            <person name="Harvey D.A."/>
            <person name="Heiman T.J."/>
            <person name="Hernandez J.R."/>
            <person name="Houck J."/>
            <person name="Hostin D."/>
            <person name="Houston K.A."/>
            <person name="Howland T.J."/>
            <person name="Wei M.-H."/>
            <person name="Ibegwam C."/>
            <person name="Jalali M."/>
            <person name="Kalush F."/>
            <person name="Karpen G.H."/>
            <person name="Ke Z."/>
            <person name="Kennison J.A."/>
            <person name="Ketchum K.A."/>
            <person name="Kimmel B.E."/>
            <person name="Kodira C.D."/>
            <person name="Kraft C.L."/>
            <person name="Kravitz S."/>
            <person name="Kulp D."/>
            <person name="Lai Z."/>
            <person name="Lasko P."/>
            <person name="Lei Y."/>
            <person name="Levitsky A.A."/>
            <person name="Li J.H."/>
            <person name="Li Z."/>
            <person name="Liang Y."/>
            <person name="Lin X."/>
            <person name="Liu X."/>
            <person name="Mattei B."/>
            <person name="McIntosh T.C."/>
            <person name="McLeod M.P."/>
            <person name="McPherson D."/>
            <person name="Merkulov G."/>
            <person name="Milshina N.V."/>
            <person name="Mobarry C."/>
            <person name="Morris J."/>
            <person name="Moshrefi A."/>
            <person name="Mount S.M."/>
            <person name="Moy M."/>
            <person name="Murphy B."/>
            <person name="Murphy L."/>
            <person name="Muzny D.M."/>
            <person name="Nelson D.L."/>
            <person name="Nelson D.R."/>
            <person name="Nelson K.A."/>
            <person name="Nixon K."/>
            <person name="Nusskern D.R."/>
            <person name="Pacleb J.M."/>
            <person name="Palazzolo M."/>
            <person name="Pittman G.S."/>
            <person name="Pan S."/>
            <person name="Pollard J."/>
            <person name="Puri V."/>
            <person name="Reese M.G."/>
            <person name="Reinert K."/>
            <person name="Remington K."/>
            <person name="Saunders R.D.C."/>
            <person name="Scheeler F."/>
            <person name="Shen H."/>
            <person name="Shue B.C."/>
            <person name="Siden-Kiamos I."/>
            <person name="Simpson M."/>
            <person name="Skupski M.P."/>
            <person name="Smith T.J."/>
            <person name="Spier E."/>
            <person name="Spradling A.C."/>
            <person name="Stapleton M."/>
            <person name="Strong R."/>
            <person name="Sun E."/>
            <person name="Svirskas R."/>
            <person name="Tector C."/>
            <person name="Turner R."/>
            <person name="Venter E."/>
            <person name="Wang A.H."/>
            <person name="Wang X."/>
            <person name="Wang Z.-Y."/>
            <person name="Wassarman D.A."/>
            <person name="Weinstock G.M."/>
            <person name="Weissenbach J."/>
            <person name="Williams S.M."/>
            <person name="Woodage T."/>
            <person name="Worley K.C."/>
            <person name="Wu D."/>
            <person name="Yang S."/>
            <person name="Yao Q.A."/>
            <person name="Ye J."/>
            <person name="Yeh R.-F."/>
            <person name="Zaveri J.S."/>
            <person name="Zhan M."/>
            <person name="Zhang G."/>
            <person name="Zhao Q."/>
            <person name="Zheng L."/>
            <person name="Zheng X.H."/>
            <person name="Zhong F.N."/>
            <person name="Zhong W."/>
            <person name="Zhou X."/>
            <person name="Zhu S.C."/>
            <person name="Zhu X."/>
            <person name="Smith H.O."/>
            <person name="Gibbs R.A."/>
            <person name="Myers E.W."/>
            <person name="Rubin G.M."/>
            <person name="Venter J.C."/>
        </authorList>
    </citation>
    <scope>NUCLEOTIDE SEQUENCE [LARGE SCALE GENOMIC DNA]</scope>
    <source>
        <strain>Berkeley</strain>
    </source>
</reference>
<reference key="5">
    <citation type="journal article" date="2002" name="Genome Biol.">
        <title>Annotation of the Drosophila melanogaster euchromatic genome: a systematic review.</title>
        <authorList>
            <person name="Misra S."/>
            <person name="Crosby M.A."/>
            <person name="Mungall C.J."/>
            <person name="Matthews B.B."/>
            <person name="Campbell K.S."/>
            <person name="Hradecky P."/>
            <person name="Huang Y."/>
            <person name="Kaminker J.S."/>
            <person name="Millburn G.H."/>
            <person name="Prochnik S.E."/>
            <person name="Smith C.D."/>
            <person name="Tupy J.L."/>
            <person name="Whitfield E.J."/>
            <person name="Bayraktaroglu L."/>
            <person name="Berman B.P."/>
            <person name="Bettencourt B.R."/>
            <person name="Celniker S.E."/>
            <person name="de Grey A.D.N.J."/>
            <person name="Drysdale R.A."/>
            <person name="Harris N.L."/>
            <person name="Richter J."/>
            <person name="Russo S."/>
            <person name="Schroeder A.J."/>
            <person name="Shu S.Q."/>
            <person name="Stapleton M."/>
            <person name="Yamada C."/>
            <person name="Ashburner M."/>
            <person name="Gelbart W.M."/>
            <person name="Rubin G.M."/>
            <person name="Lewis S.E."/>
        </authorList>
    </citation>
    <scope>GENOME REANNOTATION</scope>
    <source>
        <strain>Berkeley</strain>
    </source>
</reference>
<reference key="6">
    <citation type="submission" date="2006-12" db="EMBL/GenBank/DDBJ databases">
        <authorList>
            <person name="Stapleton M."/>
            <person name="Carlson J.W."/>
            <person name="Frise E."/>
            <person name="Kapadia B."/>
            <person name="Park S."/>
            <person name="Wan K.H."/>
            <person name="Yu C."/>
            <person name="Celniker S.E."/>
        </authorList>
    </citation>
    <scope>NUCLEOTIDE SEQUENCE [LARGE SCALE MRNA]</scope>
    <source>
        <strain>Berkeley</strain>
        <tissue>Head</tissue>
    </source>
</reference>
<reference evidence="11" key="7">
    <citation type="journal article" date="2000" name="Science">
        <title>A Drosophila complementary DNA resource.</title>
        <authorList>
            <person name="Rubin G.M."/>
            <person name="Hong L."/>
            <person name="Brokstein P."/>
            <person name="Evans-Holm M."/>
            <person name="Frise E."/>
            <person name="Stapleton M."/>
            <person name="Harvey D.A."/>
        </authorList>
    </citation>
    <scope>NUCLEOTIDE SEQUENCE [LARGE SCALE MRNA] OF 551-968</scope>
    <source>
        <strain>Berkeley</strain>
        <tissue>Head</tissue>
    </source>
</reference>
<reference key="8">
    <citation type="journal article" date="2001" name="Science">
        <title>Extension of life-span by loss of CHICO, a Drosophila insulin receptor substrate protein.</title>
        <authorList>
            <person name="Clancy D.J."/>
            <person name="Gems D."/>
            <person name="Harshman L.G."/>
            <person name="Oldham S."/>
            <person name="Stocker H."/>
            <person name="Hafen E."/>
            <person name="Leevers S.J."/>
            <person name="Partridge L."/>
        </authorList>
    </citation>
    <scope>FUNCTION</scope>
    <scope>DISRUPTION PHENOTYPE</scope>
</reference>
<reference key="9">
    <citation type="journal article" date="2005" name="J. Insect Physiol.">
        <title>Insulin signaling is necessary for vitellogenesis in Drosophila melanogaster independent of the roles of juvenile hormone and ecdysteroids: female sterility of the chico1 insulin signaling mutation is autonomous to the ovary.</title>
        <authorList>
            <person name="Richard D.S."/>
            <person name="Rybczynski R."/>
            <person name="Wilson T.G."/>
            <person name="Wang Y."/>
            <person name="Wayne M.L."/>
            <person name="Zhou Y."/>
            <person name="Partridge L."/>
            <person name="Harshman L.G."/>
        </authorList>
    </citation>
    <scope>FUNCTION</scope>
    <scope>DISRUPTION PHENOTYPE</scope>
</reference>
<reference key="10">
    <citation type="journal article" date="2008" name="J. Proteome Res.">
        <title>Phosphoproteome analysis of Drosophila melanogaster embryos.</title>
        <authorList>
            <person name="Zhai B."/>
            <person name="Villen J."/>
            <person name="Beausoleil S.A."/>
            <person name="Mintseris J."/>
            <person name="Gygi S.P."/>
        </authorList>
    </citation>
    <scope>PHOSPHORYLATION [LARGE SCALE ANALYSIS] AT SER-286; SER-287; SER-342; SER-555; SER-932 AND SER-935</scope>
    <scope>IDENTIFICATION BY MASS SPECTROMETRY</scope>
    <source>
        <tissue>Embryo</tissue>
    </source>
</reference>
<sequence length="968" mass="107832">MASISDDGMALSGYLKKLKTMKKKFFVLYEETSTSAARLEYYDTEKKFLQRAEPKRVIYLKNCFNINRRLDTKHRFVIVLSSRDGGFGIVLENENDLRKWLDKLLVLQRNIANSNGTAHSPYDHVWQVVIQKKGISEKVGITGTYHCCLTSKSLTFVCIGPEKTPNGEDRVASIEILLTTIRRCGHASPQCIFYVELGRQSVLGSGDLWMETDNAAIATNMHNTILSAMSAKTESNTNLINVYQNRPDLSHEPMRKRSSSANEASKPINVNVIQNSQNSLELRSCSSPHNYGFGRERCDSLPTRNGTLSESSNQTYFGSNHGLRSNTISGIRPHSTNKHSNSPTFTMPLRCSESEESSISVDESDDNGSFSHYRLNTRSSETAIPEENIDDFASAELFSKVTEQNVSDENYIPMNPVNPTDAIHEKEKADMQRLEDASLHFNFPEHASEKLAKDFDLDSDNQCCRPIRAYSIGNKVEHLKFNKRLGHLNDTGQNPNRVRAYSVGSKSKIPRCDLQRVVLVEDNKHEFTANRSQSSITKEGTSYGSSANRQKKSTSAPLLSLKNQINSDRMSDLMEIDFSQATNLEKQKFIKNNEIPKYIENVFPKAPRTDSSSLTLHATSQKDIFNGTKLNNTAITSEDGYLEMKPVGNGYTPSSNCLPMKVEKLKLSDYQTAPPLTATAAPVHDLNKISTYNISAEKWREQPSRSEEKKSNSPLNDNTFSSKPTNVESTSKSHDVHSANQIDCEKVCAQSSDKLNNHLADKIVENNNLDIGGHEEKKLVHSISSEDYTQIKDKSNDFTKFNEAGYKILQIKSDSSLISSKLYQKGIHKDNLERSQRLTESVNTIPDNATATAVSSSSLTKFNINSAKPAAAADSRSTGTDPSTPQNILQIKDLNFPSRSSSRISQPELHYASLDLPHCSGQNPAKYLKRGSRESPPVSACPEDGNTYAKIDFDQSDSSSSSSNIFNT</sequence>
<keyword id="KW-0221">Differentiation</keyword>
<keyword id="KW-0341">Growth regulation</keyword>
<keyword id="KW-0896">Oogenesis</keyword>
<keyword id="KW-0597">Phosphoprotein</keyword>
<keyword id="KW-1185">Reference proteome</keyword>
<keyword id="KW-0677">Repeat</keyword>
<evidence type="ECO:0000250" key="1"/>
<evidence type="ECO:0000255" key="2">
    <source>
        <dbReference type="PROSITE-ProRule" id="PRU00145"/>
    </source>
</evidence>
<evidence type="ECO:0000255" key="3">
    <source>
        <dbReference type="PROSITE-ProRule" id="PRU00389"/>
    </source>
</evidence>
<evidence type="ECO:0000256" key="4">
    <source>
        <dbReference type="SAM" id="MobiDB-lite"/>
    </source>
</evidence>
<evidence type="ECO:0000269" key="5">
    <source>
    </source>
</evidence>
<evidence type="ECO:0000269" key="6">
    <source>
    </source>
</evidence>
<evidence type="ECO:0000269" key="7">
    <source>
    </source>
</evidence>
<evidence type="ECO:0000269" key="8">
    <source>
    </source>
</evidence>
<evidence type="ECO:0000269" key="9">
    <source>
    </source>
</evidence>
<evidence type="ECO:0000269" key="10">
    <source>
    </source>
</evidence>
<evidence type="ECO:0000305" key="11"/>
<dbReference type="EMBL" id="AF154826">
    <property type="protein sequence ID" value="AAD40880.1"/>
    <property type="molecule type" value="mRNA"/>
</dbReference>
<dbReference type="EMBL" id="AF092046">
    <property type="protein sequence ID" value="AAD43005.1"/>
    <property type="molecule type" value="mRNA"/>
</dbReference>
<dbReference type="EMBL" id="GQ927177">
    <property type="protein sequence ID" value="ACY01718.1"/>
    <property type="molecule type" value="Genomic_DNA"/>
</dbReference>
<dbReference type="EMBL" id="GQ927178">
    <property type="protein sequence ID" value="ACY01719.1"/>
    <property type="molecule type" value="Genomic_DNA"/>
</dbReference>
<dbReference type="EMBL" id="GQ927179">
    <property type="protein sequence ID" value="ACY01720.1"/>
    <property type="molecule type" value="Genomic_DNA"/>
</dbReference>
<dbReference type="EMBL" id="GQ927180">
    <property type="protein sequence ID" value="ACY01721.1"/>
    <property type="molecule type" value="Genomic_DNA"/>
</dbReference>
<dbReference type="EMBL" id="GQ927181">
    <property type="protein sequence ID" value="ACY01722.1"/>
    <property type="molecule type" value="Genomic_DNA"/>
</dbReference>
<dbReference type="EMBL" id="GQ927182">
    <property type="protein sequence ID" value="ACY01723.1"/>
    <property type="molecule type" value="Genomic_DNA"/>
</dbReference>
<dbReference type="EMBL" id="GQ927183">
    <property type="protein sequence ID" value="ACY01724.1"/>
    <property type="molecule type" value="Genomic_DNA"/>
</dbReference>
<dbReference type="EMBL" id="GQ927184">
    <property type="protein sequence ID" value="ACY01725.1"/>
    <property type="molecule type" value="Genomic_DNA"/>
</dbReference>
<dbReference type="EMBL" id="GQ927185">
    <property type="protein sequence ID" value="ACY01726.1"/>
    <property type="molecule type" value="Genomic_DNA"/>
</dbReference>
<dbReference type="EMBL" id="GQ927186">
    <property type="protein sequence ID" value="ACY01727.1"/>
    <property type="molecule type" value="Genomic_DNA"/>
</dbReference>
<dbReference type="EMBL" id="GQ927187">
    <property type="protein sequence ID" value="ACY01728.1"/>
    <property type="molecule type" value="Genomic_DNA"/>
</dbReference>
<dbReference type="EMBL" id="GQ927188">
    <property type="protein sequence ID" value="ACY01729.1"/>
    <property type="molecule type" value="Genomic_DNA"/>
</dbReference>
<dbReference type="EMBL" id="GQ927189">
    <property type="protein sequence ID" value="ACY01730.1"/>
    <property type="molecule type" value="Genomic_DNA"/>
</dbReference>
<dbReference type="EMBL" id="GQ927190">
    <property type="protein sequence ID" value="ACY01731.1"/>
    <property type="molecule type" value="Genomic_DNA"/>
</dbReference>
<dbReference type="EMBL" id="GQ927191">
    <property type="protein sequence ID" value="ACY01732.1"/>
    <property type="molecule type" value="Genomic_DNA"/>
</dbReference>
<dbReference type="EMBL" id="GQ927192">
    <property type="protein sequence ID" value="ACY01733.1"/>
    <property type="molecule type" value="Genomic_DNA"/>
</dbReference>
<dbReference type="EMBL" id="GQ927193">
    <property type="protein sequence ID" value="ACY01734.1"/>
    <property type="molecule type" value="Genomic_DNA"/>
</dbReference>
<dbReference type="EMBL" id="GQ927194">
    <property type="protein sequence ID" value="ACY01735.1"/>
    <property type="molecule type" value="Genomic_DNA"/>
</dbReference>
<dbReference type="EMBL" id="GQ927195">
    <property type="protein sequence ID" value="ACY01736.1"/>
    <property type="molecule type" value="Genomic_DNA"/>
</dbReference>
<dbReference type="EMBL" id="GQ927196">
    <property type="protein sequence ID" value="ACY01737.1"/>
    <property type="molecule type" value="Genomic_DNA"/>
</dbReference>
<dbReference type="EMBL" id="GQ927197">
    <property type="protein sequence ID" value="ACY01738.1"/>
    <property type="molecule type" value="Genomic_DNA"/>
</dbReference>
<dbReference type="EMBL" id="GQ927198">
    <property type="protein sequence ID" value="ACY01739.1"/>
    <property type="molecule type" value="Genomic_DNA"/>
</dbReference>
<dbReference type="EMBL" id="GQ927199">
    <property type="protein sequence ID" value="ACY01740.1"/>
    <property type="molecule type" value="Genomic_DNA"/>
</dbReference>
<dbReference type="EMBL" id="GQ927200">
    <property type="protein sequence ID" value="ACY01741.1"/>
    <property type="molecule type" value="Genomic_DNA"/>
</dbReference>
<dbReference type="EMBL" id="GQ927201">
    <property type="protein sequence ID" value="ACY01742.1"/>
    <property type="molecule type" value="Genomic_DNA"/>
</dbReference>
<dbReference type="EMBL" id="GQ927202">
    <property type="protein sequence ID" value="ACY01743.1"/>
    <property type="molecule type" value="Genomic_DNA"/>
</dbReference>
<dbReference type="EMBL" id="GQ927203">
    <property type="protein sequence ID" value="ACY01744.1"/>
    <property type="molecule type" value="Genomic_DNA"/>
</dbReference>
<dbReference type="EMBL" id="AE014134">
    <property type="protein sequence ID" value="AAF52882.1"/>
    <property type="molecule type" value="Genomic_DNA"/>
</dbReference>
<dbReference type="EMBL" id="BT016137">
    <property type="protein sequence ID" value="AAV37022.1"/>
    <property type="molecule type" value="mRNA"/>
</dbReference>
<dbReference type="EMBL" id="AF181643">
    <property type="protein sequence ID" value="AAD55429.1"/>
    <property type="status" value="ALT_INIT"/>
    <property type="molecule type" value="mRNA"/>
</dbReference>
<dbReference type="RefSeq" id="NP_001188772.1">
    <property type="nucleotide sequence ID" value="NM_001201843.2"/>
</dbReference>
<dbReference type="RefSeq" id="NP_001260316.1">
    <property type="nucleotide sequence ID" value="NM_001273387.1"/>
</dbReference>
<dbReference type="RefSeq" id="NP_723540.1">
    <property type="nucleotide sequence ID" value="NM_164899.3"/>
</dbReference>
<dbReference type="SMR" id="Q9XTN2"/>
<dbReference type="BioGRID" id="72865">
    <property type="interactions" value="39"/>
</dbReference>
<dbReference type="DIP" id="DIP-23631N"/>
<dbReference type="FunCoup" id="Q9XTN2">
    <property type="interactions" value="360"/>
</dbReference>
<dbReference type="IntAct" id="Q9XTN2">
    <property type="interactions" value="14"/>
</dbReference>
<dbReference type="STRING" id="7227.FBpp0305604"/>
<dbReference type="GlyGen" id="Q9XTN2">
    <property type="glycosylation" value="1 site"/>
</dbReference>
<dbReference type="iPTMnet" id="Q9XTN2"/>
<dbReference type="PaxDb" id="7227-FBpp0079677"/>
<dbReference type="DNASU" id="64880"/>
<dbReference type="EnsemblMetazoa" id="FBtr0080088">
    <property type="protein sequence ID" value="FBpp0079677"/>
    <property type="gene ID" value="FBgn0024248"/>
</dbReference>
<dbReference type="EnsemblMetazoa" id="FBtr0303904">
    <property type="protein sequence ID" value="FBpp0292907"/>
    <property type="gene ID" value="FBgn0024248"/>
</dbReference>
<dbReference type="EnsemblMetazoa" id="FBtr0333412">
    <property type="protein sequence ID" value="FBpp0305604"/>
    <property type="gene ID" value="FBgn0024248"/>
</dbReference>
<dbReference type="GeneID" id="64880"/>
<dbReference type="KEGG" id="dme:Dmel_CG5686"/>
<dbReference type="UCSC" id="CG5686-RA">
    <property type="organism name" value="d. melanogaster"/>
</dbReference>
<dbReference type="AGR" id="FB:FBgn0024248"/>
<dbReference type="CTD" id="30067"/>
<dbReference type="FlyBase" id="FBgn0024248">
    <property type="gene designation" value="chico"/>
</dbReference>
<dbReference type="VEuPathDB" id="VectorBase:FBgn0024248"/>
<dbReference type="eggNOG" id="ENOG502QUNU">
    <property type="taxonomic scope" value="Eukaryota"/>
</dbReference>
<dbReference type="GeneTree" id="ENSGT00940000170368"/>
<dbReference type="HOGENOM" id="CLU_012544_0_0_1"/>
<dbReference type="InParanoid" id="Q9XTN2"/>
<dbReference type="OMA" id="RNCSSPH"/>
<dbReference type="OrthoDB" id="946068at2759"/>
<dbReference type="PhylomeDB" id="Q9XTN2"/>
<dbReference type="Reactome" id="R-DME-109704">
    <property type="pathway name" value="PI3K Cascade"/>
</dbReference>
<dbReference type="Reactome" id="R-DME-110478">
    <property type="pathway name" value="Insulin signaling pathway"/>
</dbReference>
<dbReference type="Reactome" id="R-DME-112399">
    <property type="pathway name" value="IRS-mediated signalling"/>
</dbReference>
<dbReference type="Reactome" id="R-DME-112412">
    <property type="pathway name" value="SOS-mediated signalling"/>
</dbReference>
<dbReference type="Reactome" id="R-DME-1257604">
    <property type="pathway name" value="PIP3 activates AKT signaling"/>
</dbReference>
<dbReference type="Reactome" id="R-DME-5673001">
    <property type="pathway name" value="RAF/MAP kinase cascade"/>
</dbReference>
<dbReference type="Reactome" id="R-DME-6811558">
    <property type="pathway name" value="PI5P, PP2A and IER3 Regulate PI3K/AKT Signaling"/>
</dbReference>
<dbReference type="Reactome" id="R-DME-74749">
    <property type="pathway name" value="Signal attenuation"/>
</dbReference>
<dbReference type="Reactome" id="R-DME-9006335">
    <property type="pathway name" value="Signaling by Erythropoietin"/>
</dbReference>
<dbReference type="Reactome" id="R-DME-9027276">
    <property type="pathway name" value="Erythropoietin activates Phosphoinositide-3-kinase (PI3K)"/>
</dbReference>
<dbReference type="Reactome" id="R-DME-9027284">
    <property type="pathway name" value="Erythropoietin activates RAS"/>
</dbReference>
<dbReference type="SignaLink" id="Q9XTN2"/>
<dbReference type="BioGRID-ORCS" id="64880">
    <property type="hits" value="0 hits in 3 CRISPR screens"/>
</dbReference>
<dbReference type="ChiTaRS" id="chico">
    <property type="organism name" value="fly"/>
</dbReference>
<dbReference type="GenomeRNAi" id="64880"/>
<dbReference type="PRO" id="PR:Q9XTN2"/>
<dbReference type="Proteomes" id="UP000000803">
    <property type="component" value="Chromosome 2L"/>
</dbReference>
<dbReference type="Bgee" id="FBgn0024248">
    <property type="expression patterns" value="Expressed in capitellum (Drosophila) and 167 other cell types or tissues"/>
</dbReference>
<dbReference type="ExpressionAtlas" id="Q9XTN2">
    <property type="expression patterns" value="baseline and differential"/>
</dbReference>
<dbReference type="GO" id="GO:0005938">
    <property type="term" value="C:cell cortex"/>
    <property type="evidence" value="ECO:0000314"/>
    <property type="project" value="FlyBase"/>
</dbReference>
<dbReference type="GO" id="GO:0005737">
    <property type="term" value="C:cytoplasm"/>
    <property type="evidence" value="ECO:0000250"/>
    <property type="project" value="UniProtKB"/>
</dbReference>
<dbReference type="GO" id="GO:0005829">
    <property type="term" value="C:cytosol"/>
    <property type="evidence" value="ECO:0000314"/>
    <property type="project" value="FlyBase"/>
</dbReference>
<dbReference type="GO" id="GO:0043231">
    <property type="term" value="C:intracellular membrane-bounded organelle"/>
    <property type="evidence" value="ECO:0000250"/>
    <property type="project" value="UniProtKB"/>
</dbReference>
<dbReference type="GO" id="GO:0005634">
    <property type="term" value="C:nucleus"/>
    <property type="evidence" value="ECO:0000250"/>
    <property type="project" value="UniProtKB"/>
</dbReference>
<dbReference type="GO" id="GO:0005886">
    <property type="term" value="C:plasma membrane"/>
    <property type="evidence" value="ECO:0007005"/>
    <property type="project" value="FlyBase"/>
</dbReference>
<dbReference type="GO" id="GO:0005158">
    <property type="term" value="F:insulin receptor binding"/>
    <property type="evidence" value="ECO:0000316"/>
    <property type="project" value="FlyBase"/>
</dbReference>
<dbReference type="GO" id="GO:0005159">
    <property type="term" value="F:insulin-like growth factor receptor binding"/>
    <property type="evidence" value="ECO:0000250"/>
    <property type="project" value="UniProtKB"/>
</dbReference>
<dbReference type="GO" id="GO:0043548">
    <property type="term" value="F:phosphatidylinositol 3-kinase binding"/>
    <property type="evidence" value="ECO:0000250"/>
    <property type="project" value="UniProtKB"/>
</dbReference>
<dbReference type="GO" id="GO:0042169">
    <property type="term" value="F:SH2 domain binding"/>
    <property type="evidence" value="ECO:0000250"/>
    <property type="project" value="UniProtKB"/>
</dbReference>
<dbReference type="GO" id="GO:0009267">
    <property type="term" value="P:cellular response to starvation"/>
    <property type="evidence" value="ECO:0000315"/>
    <property type="project" value="FlyBase"/>
</dbReference>
<dbReference type="GO" id="GO:0008340">
    <property type="term" value="P:determination of adult lifespan"/>
    <property type="evidence" value="ECO:0000315"/>
    <property type="project" value="FlyBase"/>
</dbReference>
<dbReference type="GO" id="GO:0060250">
    <property type="term" value="P:germ-line stem-cell niche homeostasis"/>
    <property type="evidence" value="ECO:0000315"/>
    <property type="project" value="FlyBase"/>
</dbReference>
<dbReference type="GO" id="GO:0042593">
    <property type="term" value="P:glucose homeostasis"/>
    <property type="evidence" value="ECO:0000315"/>
    <property type="project" value="FlyBase"/>
</dbReference>
<dbReference type="GO" id="GO:0007295">
    <property type="term" value="P:growth of a germarium-derived egg chamber"/>
    <property type="evidence" value="ECO:0000315"/>
    <property type="project" value="FlyBase"/>
</dbReference>
<dbReference type="GO" id="GO:0008286">
    <property type="term" value="P:insulin receptor signaling pathway"/>
    <property type="evidence" value="ECO:0000314"/>
    <property type="project" value="FlyBase"/>
</dbReference>
<dbReference type="GO" id="GO:0048009">
    <property type="term" value="P:insulin-like growth factor receptor signaling pathway"/>
    <property type="evidence" value="ECO:0000250"/>
    <property type="project" value="UniProtKB"/>
</dbReference>
<dbReference type="GO" id="GO:0055088">
    <property type="term" value="P:lipid homeostasis"/>
    <property type="evidence" value="ECO:0000315"/>
    <property type="project" value="FlyBase"/>
</dbReference>
<dbReference type="GO" id="GO:0060291">
    <property type="term" value="P:long-term synaptic potentiation"/>
    <property type="evidence" value="ECO:0000315"/>
    <property type="project" value="FlyBase"/>
</dbReference>
<dbReference type="GO" id="GO:0048133">
    <property type="term" value="P:male germ-line stem cell asymmetric division"/>
    <property type="evidence" value="ECO:0000315"/>
    <property type="project" value="FlyBase"/>
</dbReference>
<dbReference type="GO" id="GO:0035264">
    <property type="term" value="P:multicellular organism growth"/>
    <property type="evidence" value="ECO:0000315"/>
    <property type="project" value="FlyBase"/>
</dbReference>
<dbReference type="GO" id="GO:0061964">
    <property type="term" value="P:negative regulation of entry into reproductive diapause"/>
    <property type="evidence" value="ECO:0000315"/>
    <property type="project" value="FlyBase"/>
</dbReference>
<dbReference type="GO" id="GO:0010897">
    <property type="term" value="P:negative regulation of triglyceride catabolic process"/>
    <property type="evidence" value="ECO:0000315"/>
    <property type="project" value="FlyBase"/>
</dbReference>
<dbReference type="GO" id="GO:0008355">
    <property type="term" value="P:olfactory learning"/>
    <property type="evidence" value="ECO:0000315"/>
    <property type="project" value="FlyBase"/>
</dbReference>
<dbReference type="GO" id="GO:1903688">
    <property type="term" value="P:positive regulation of border follicle cell migration"/>
    <property type="evidence" value="ECO:0000315"/>
    <property type="project" value="FlyBase"/>
</dbReference>
<dbReference type="GO" id="GO:0008284">
    <property type="term" value="P:positive regulation of cell population proliferation"/>
    <property type="evidence" value="ECO:0000315"/>
    <property type="project" value="FlyBase"/>
</dbReference>
<dbReference type="GO" id="GO:0045793">
    <property type="term" value="P:positive regulation of cell size"/>
    <property type="evidence" value="ECO:0000315"/>
    <property type="project" value="FlyBase"/>
</dbReference>
<dbReference type="GO" id="GO:0045927">
    <property type="term" value="P:positive regulation of growth"/>
    <property type="evidence" value="ECO:0000315"/>
    <property type="project" value="FlyBase"/>
</dbReference>
<dbReference type="GO" id="GO:0050778">
    <property type="term" value="P:positive regulation of immune response"/>
    <property type="evidence" value="ECO:0000315"/>
    <property type="project" value="FlyBase"/>
</dbReference>
<dbReference type="GO" id="GO:0040018">
    <property type="term" value="P:positive regulation of multicellular organism growth"/>
    <property type="evidence" value="ECO:0000315"/>
    <property type="project" value="FlyBase"/>
</dbReference>
<dbReference type="GO" id="GO:0046622">
    <property type="term" value="P:positive regulation of organ growth"/>
    <property type="evidence" value="ECO:0000315"/>
    <property type="project" value="FlyBase"/>
</dbReference>
<dbReference type="GO" id="GO:0051897">
    <property type="term" value="P:positive regulation of phosphatidylinositol 3-kinase/protein kinase B signal transduction"/>
    <property type="evidence" value="ECO:0000314"/>
    <property type="project" value="FlyBase"/>
</dbReference>
<dbReference type="GO" id="GO:0007285">
    <property type="term" value="P:primary spermatocyte growth"/>
    <property type="evidence" value="ECO:0000315"/>
    <property type="project" value="FlyBase"/>
</dbReference>
<dbReference type="GO" id="GO:0035159">
    <property type="term" value="P:regulation of tube length, open tracheal system"/>
    <property type="evidence" value="ECO:0000315"/>
    <property type="project" value="FlyBase"/>
</dbReference>
<dbReference type="GO" id="GO:0034059">
    <property type="term" value="P:response to anoxia"/>
    <property type="evidence" value="ECO:0000314"/>
    <property type="project" value="FlyBase"/>
</dbReference>
<dbReference type="GO" id="GO:0042594">
    <property type="term" value="P:response to starvation"/>
    <property type="evidence" value="ECO:0000315"/>
    <property type="project" value="FlyBase"/>
</dbReference>
<dbReference type="GO" id="GO:0007296">
    <property type="term" value="P:vitellogenesis"/>
    <property type="evidence" value="ECO:0000315"/>
    <property type="project" value="UniProtKB"/>
</dbReference>
<dbReference type="CDD" id="cd01257">
    <property type="entry name" value="PH_IRS"/>
    <property type="match status" value="1"/>
</dbReference>
<dbReference type="CDD" id="cd01204">
    <property type="entry name" value="PTB_IRS"/>
    <property type="match status" value="1"/>
</dbReference>
<dbReference type="FunFam" id="2.30.29.30:FF:000441">
    <property type="entry name" value="Insulin receptor substrate 1"/>
    <property type="match status" value="1"/>
</dbReference>
<dbReference type="FunFam" id="2.30.29.30:FF:000457">
    <property type="entry name" value="Insulin receptor substrate 1"/>
    <property type="match status" value="1"/>
</dbReference>
<dbReference type="Gene3D" id="2.30.29.30">
    <property type="entry name" value="Pleckstrin-homology domain (PH domain)/Phosphotyrosine-binding domain (PTB)"/>
    <property type="match status" value="2"/>
</dbReference>
<dbReference type="InterPro" id="IPR039011">
    <property type="entry name" value="IRS"/>
</dbReference>
<dbReference type="InterPro" id="IPR002404">
    <property type="entry name" value="IRS_PTB"/>
</dbReference>
<dbReference type="InterPro" id="IPR011993">
    <property type="entry name" value="PH-like_dom_sf"/>
</dbReference>
<dbReference type="InterPro" id="IPR001849">
    <property type="entry name" value="PH_domain"/>
</dbReference>
<dbReference type="PANTHER" id="PTHR10614">
    <property type="entry name" value="INSULIN RECEPTOR SUBSTRATE"/>
    <property type="match status" value="1"/>
</dbReference>
<dbReference type="PANTHER" id="PTHR10614:SF13">
    <property type="entry name" value="INSULIN RECEPTOR SUBSTRATE 1"/>
    <property type="match status" value="1"/>
</dbReference>
<dbReference type="Pfam" id="PF02174">
    <property type="entry name" value="IRS"/>
    <property type="match status" value="1"/>
</dbReference>
<dbReference type="PRINTS" id="PR00628">
    <property type="entry name" value="INSULINRSI"/>
</dbReference>
<dbReference type="SMART" id="SM01244">
    <property type="entry name" value="IRS"/>
    <property type="match status" value="1"/>
</dbReference>
<dbReference type="SMART" id="SM00233">
    <property type="entry name" value="PH"/>
    <property type="match status" value="1"/>
</dbReference>
<dbReference type="SMART" id="SM00310">
    <property type="entry name" value="PTBI"/>
    <property type="match status" value="1"/>
</dbReference>
<dbReference type="SUPFAM" id="SSF50729">
    <property type="entry name" value="PH domain-like"/>
    <property type="match status" value="2"/>
</dbReference>
<dbReference type="PROSITE" id="PS51064">
    <property type="entry name" value="IRS_PTB"/>
    <property type="match status" value="1"/>
</dbReference>
<dbReference type="PROSITE" id="PS50003">
    <property type="entry name" value="PH_DOMAIN"/>
    <property type="match status" value="1"/>
</dbReference>
<protein>
    <recommendedName>
        <fullName>Insulin receptor substrate 1</fullName>
        <shortName>dIRS</shortName>
    </recommendedName>
    <alternativeName>
        <fullName>Protein chico</fullName>
    </alternativeName>
</protein>
<organism>
    <name type="scientific">Drosophila melanogaster</name>
    <name type="common">Fruit fly</name>
    <dbReference type="NCBI Taxonomy" id="7227"/>
    <lineage>
        <taxon>Eukaryota</taxon>
        <taxon>Metazoa</taxon>
        <taxon>Ecdysozoa</taxon>
        <taxon>Arthropoda</taxon>
        <taxon>Hexapoda</taxon>
        <taxon>Insecta</taxon>
        <taxon>Pterygota</taxon>
        <taxon>Neoptera</taxon>
        <taxon>Endopterygota</taxon>
        <taxon>Diptera</taxon>
        <taxon>Brachycera</taxon>
        <taxon>Muscomorpha</taxon>
        <taxon>Ephydroidea</taxon>
        <taxon>Drosophilidae</taxon>
        <taxon>Drosophila</taxon>
        <taxon>Sophophora</taxon>
    </lineage>
</organism>
<gene>
    <name type="primary">chico</name>
    <name type="synonym">IRS</name>
    <name type="ORF">CG5686</name>
</gene>
<proteinExistence type="evidence at protein level"/>
<feature type="chain" id="PRO_0000084235" description="Insulin receptor substrate 1">
    <location>
        <begin position="1"/>
        <end position="968"/>
    </location>
</feature>
<feature type="domain" description="PH" evidence="2 11">
    <location>
        <begin position="8"/>
        <end position="109"/>
    </location>
</feature>
<feature type="domain" description="IRS-type PTB" evidence="3">
    <location>
        <begin position="122"/>
        <end position="236"/>
    </location>
</feature>
<feature type="region of interest" description="Disordered" evidence="4">
    <location>
        <begin position="248"/>
        <end position="269"/>
    </location>
</feature>
<feature type="region of interest" description="Disordered" evidence="4">
    <location>
        <begin position="304"/>
        <end position="370"/>
    </location>
</feature>
<feature type="region of interest" description="Disordered" evidence="4">
    <location>
        <begin position="528"/>
        <end position="555"/>
    </location>
</feature>
<feature type="region of interest" description="Disordered" evidence="4">
    <location>
        <begin position="697"/>
        <end position="739"/>
    </location>
</feature>
<feature type="region of interest" description="Disordered" evidence="4">
    <location>
        <begin position="922"/>
        <end position="968"/>
    </location>
</feature>
<feature type="short sequence motif" description="YXXM motif 1">
    <location>
        <begin position="411"/>
        <end position="414"/>
    </location>
</feature>
<feature type="short sequence motif" description="YXXM motif 2">
    <location>
        <begin position="641"/>
        <end position="644"/>
    </location>
</feature>
<feature type="compositionally biased region" description="Polar residues" evidence="4">
    <location>
        <begin position="304"/>
        <end position="329"/>
    </location>
</feature>
<feature type="compositionally biased region" description="Polar residues" evidence="4">
    <location>
        <begin position="529"/>
        <end position="555"/>
    </location>
</feature>
<feature type="compositionally biased region" description="Basic and acidic residues" evidence="4">
    <location>
        <begin position="697"/>
        <end position="711"/>
    </location>
</feature>
<feature type="compositionally biased region" description="Polar residues" evidence="4">
    <location>
        <begin position="712"/>
        <end position="730"/>
    </location>
</feature>
<feature type="compositionally biased region" description="Low complexity" evidence="4">
    <location>
        <begin position="956"/>
        <end position="968"/>
    </location>
</feature>
<feature type="modified residue" description="Phosphoserine" evidence="9">
    <location>
        <position position="286"/>
    </location>
</feature>
<feature type="modified residue" description="Phosphoserine" evidence="9">
    <location>
        <position position="287"/>
    </location>
</feature>
<feature type="modified residue" description="Phosphoserine" evidence="9">
    <location>
        <position position="342"/>
    </location>
</feature>
<feature type="modified residue" description="Phosphotyrosine; by INSR" evidence="1">
    <location>
        <position position="411"/>
    </location>
</feature>
<feature type="modified residue" description="Phosphoserine" evidence="9">
    <location>
        <position position="555"/>
    </location>
</feature>
<feature type="modified residue" description="Phosphotyrosine; by INSR" evidence="1">
    <location>
        <position position="911"/>
    </location>
</feature>
<feature type="modified residue" description="Phosphoserine" evidence="9">
    <location>
        <position position="932"/>
    </location>
</feature>
<feature type="modified residue" description="Phosphoserine" evidence="9">
    <location>
        <position position="935"/>
    </location>
</feature>
<feature type="modified residue" description="Phosphotyrosine; by INSR" evidence="1">
    <location>
        <position position="948"/>
    </location>
</feature>
<feature type="sequence variant" description="In strain: S108." evidence="10">
    <original>Y</original>
    <variation>C</variation>
    <location>
        <position position="29"/>
    </location>
</feature>
<feature type="sequence variant" description="In strain: FSP2, FSP15, FSP16, FSP19, FSP23, FSP29, RR8, RR11, RR17, RR18, RR35, RR52, S76, SL5_131, SL5_29, T28 and T39." evidence="10">
    <original>P</original>
    <variation>T</variation>
    <location>
        <position position="165"/>
    </location>
</feature>
<feature type="sequence variant" description="In strain: S108." evidence="10">
    <location>
        <position position="334"/>
    </location>
</feature>
<feature type="sequence variant" description="In strain: FSP19, RR33 and S108." evidence="10">
    <original>A</original>
    <variation>V</variation>
    <location>
        <position position="429"/>
    </location>
</feature>
<feature type="sequence variant" description="In strain: RR33, S108, T28 and T39." evidence="10">
    <original>A</original>
    <variation>T</variation>
    <location>
        <position position="452"/>
    </location>
</feature>
<feature type="sequence variant" description="In strain: FSP2, FSP3, FSP15, FSP19, FSP23, FSP25, FSP29, RR8, RR11, RR17, RR18, RR33, RR35, RR52, S76, S107, S108, T9, T15, T28, T39 and T41." evidence="10">
    <original>K</original>
    <variation>R</variation>
    <location>
        <position position="664"/>
    </location>
</feature>
<feature type="sequence variant" description="In strain: S103." evidence="10">
    <original>P</original>
    <variation>S</variation>
    <location>
        <position position="675"/>
    </location>
</feature>
<feature type="sequence variant" description="In strain: FSP3, FSP15, FSP19, FSP23, FSP25, RR8, RR11, RR17, RR33, RR35, RR52, S76, S97, S107, S108, T9, T28, T39 and T41." evidence="10">
    <original>L</original>
    <variation>I</variation>
    <location>
        <position position="676"/>
    </location>
</feature>
<feature type="sequence variant" description="In strain: FSP2, FSP3, FSP15, FSP23, FSP25, FSP29, RR8, RR11, RR17, RR18, RR33, RR35, RR52, S108, T9, T15, T28, T39 and T41." evidence="10">
    <original>S</original>
    <variation>G</variation>
    <location>
        <position position="721"/>
    </location>
</feature>
<feature type="sequence variant" description="In strain: FSP2, FSP3, FSP15, FSP16, FSP19, FSP23, FSP25, FSP29, RR8, RR11, RR17, RR18, RR33, RR35, RR52, S76, S97, S103, S107, S108, SL5_131, SL5_29, T9, T15, T28, T39 and T41." evidence="10">
    <original>S</original>
    <variation>L</variation>
    <location>
        <position position="722"/>
    </location>
</feature>
<feature type="sequence variant" description="In strain: FSP3, FSP15, FSP16, FSP23, FSP25, FSP29, RR8, RR11, RR17, RR33, RR35, RR52, S108, T9, T15, T28, T39 and T41." evidence="10">
    <original>C</original>
    <variation>S</variation>
    <location>
        <position position="744"/>
    </location>
</feature>
<feature type="sequence variant" description="In strain: FSP2, FSP3, FSP15, FSP16, FSP23, FSP25. FSP29, RR8, RR11, RR17, RR18, RR35, RR52, S97, S103, S108, SL5_131, SL5_29, T9, T15 and T41." evidence="10">
    <location>
        <position position="758"/>
    </location>
</feature>
<feature type="sequence variant" description="In strain: RR8 and T41." evidence="10">
    <original>I</original>
    <variation>M</variation>
    <location>
        <position position="808"/>
    </location>
</feature>
<feature type="sequence variant" description="In strain: FSP19." evidence="10">
    <original>A</original>
    <variation>V</variation>
    <location>
        <position position="851"/>
    </location>
</feature>
<feature type="sequence variant" description="In strain: FSP16." evidence="10">
    <original>A</original>
    <variation>T</variation>
    <location>
        <position position="873"/>
    </location>
</feature>
<accession>Q9XTN2</accession>
<accession>D0UY43</accession>
<accession>D0UY45</accession>
<accession>D0UY46</accession>
<accession>D0UY47</accession>
<accession>D0UY49</accession>
<accession>D0UY50</accession>
<accession>D0UY51</accession>
<accession>D0UY52</accession>
<accession>D0UY54</accession>
<accession>D0UY55</accession>
<accession>D0UY61</accession>
<accession>D0UY62</accession>
<accession>D0UY64</accession>
<accession>D0UY65</accession>
<accession>D0UY66</accession>
<accession>D0UY67</accession>
<accession>D0UY68</accession>
<accession>Q5U0V5</accession>
<accession>Q9U4G2</accession>